<reference key="1">
    <citation type="journal article" date="2007" name="J. Bacteriol.">
        <title>Genome sequence of Avery's virulent serotype 2 strain D39 of Streptococcus pneumoniae and comparison with that of unencapsulated laboratory strain R6.</title>
        <authorList>
            <person name="Lanie J.A."/>
            <person name="Ng W.-L."/>
            <person name="Kazmierczak K.M."/>
            <person name="Andrzejewski T.M."/>
            <person name="Davidsen T.M."/>
            <person name="Wayne K.J."/>
            <person name="Tettelin H."/>
            <person name="Glass J.I."/>
            <person name="Winkler M.E."/>
        </authorList>
    </citation>
    <scope>NUCLEOTIDE SEQUENCE [LARGE SCALE GENOMIC DNA]</scope>
    <source>
        <strain>D39 / NCTC 7466</strain>
    </source>
</reference>
<reference key="2">
    <citation type="journal article" date="2004" name="Infect. Immun.">
        <title>Protein serine/threonine kinase StkP positively controls virulence and competence in Streptococcus pneumoniae.</title>
        <authorList>
            <person name="Echenique J."/>
            <person name="Kadioglu A."/>
            <person name="Romao S."/>
            <person name="Andrew P.W."/>
            <person name="Trombe M.C."/>
        </authorList>
    </citation>
    <scope>DISRUPTION PHENOTYPE</scope>
    <source>
        <strain>23477</strain>
        <strain>D39 / NCTC 7466</strain>
    </source>
</reference>
<reference key="3">
    <citation type="journal article" date="2010" name="J. Bacteriol.">
        <title>Identification of multiple substrates of the StkP Ser/Thr protein kinase in Streptococcus pneumoniae.</title>
        <authorList>
            <person name="Novakova L."/>
            <person name="Bezouskova S."/>
            <person name="Pompach P."/>
            <person name="Spidlova P."/>
            <person name="Saskova L."/>
            <person name="Weiser J."/>
            <person name="Branny P."/>
        </authorList>
    </citation>
    <scope>TARGET PROTEIN SUBSTRATES</scope>
    <source>
        <strain>D39 / NCTC 7466</strain>
    </source>
</reference>
<reference key="4">
    <citation type="journal article" date="2012" name="Proc. Natl. Acad. Sci. U.S.A.">
        <title>Control of cell division in Streptococcus pneumoniae by the conserved Ser/Thr protein kinase StkP.</title>
        <authorList>
            <person name="Beilharz K."/>
            <person name="Novakova L."/>
            <person name="Fadda D."/>
            <person name="Branny P."/>
            <person name="Massidda O."/>
            <person name="Veening J.W."/>
        </authorList>
    </citation>
    <scope>FUNCTION</scope>
    <scope>CATALYTIC ACTIVITY</scope>
    <scope>IDENTIFICATION OF DIVIVA AS SUBSTRATE</scope>
    <scope>SUBCELLULAR LOCATION</scope>
    <scope>DOMAIN</scope>
    <source>
        <strain>D39 / NCTC 7466</strain>
    </source>
</reference>
<reference key="5">
    <citation type="journal article" date="2017" name="Mol. Microbiol.">
        <title>Absence of the KhpA and KhpB (JAG/EloR) RNA-binding proteins suppresses the requirement for PBP2b by overproduction of FtsA in Streptococcus pneumoniae D39.</title>
        <authorList>
            <person name="Zheng J.J."/>
            <person name="Perez A.J."/>
            <person name="Tsui H.T."/>
            <person name="Massidda O."/>
            <person name="Winkler M.E."/>
        </authorList>
    </citation>
    <scope>SUBCELLULAR LOCATION</scope>
    <source>
        <strain>D39 / NCTC 7466</strain>
    </source>
</reference>
<evidence type="ECO:0000250" key="1"/>
<evidence type="ECO:0000255" key="2">
    <source>
        <dbReference type="PROSITE-ProRule" id="PRU00159"/>
    </source>
</evidence>
<evidence type="ECO:0000255" key="3">
    <source>
        <dbReference type="PROSITE-ProRule" id="PRU00528"/>
    </source>
</evidence>
<evidence type="ECO:0000255" key="4">
    <source>
        <dbReference type="PROSITE-ProRule" id="PRU10027"/>
    </source>
</evidence>
<evidence type="ECO:0000256" key="5">
    <source>
        <dbReference type="SAM" id="MobiDB-lite"/>
    </source>
</evidence>
<evidence type="ECO:0000269" key="6">
    <source>
    </source>
</evidence>
<evidence type="ECO:0000269" key="7">
    <source>
    </source>
</evidence>
<evidence type="ECO:0000269" key="8">
    <source>
    </source>
</evidence>
<sequence>MIQIGKIFAGRYRIVKQIGRGGMADVYLAKDLILDGEEVAVKVLRTNYQTDPIAVARFQREARAMADLDHPHIVRITDIGEEDGQQYLAMEYVAGLDLKRYIKEHYPLSNEEAVRIMGQILLAMRLAHTRGIVHRDLKPQNILLTPDGTAKVTDFGIAVAFAETSLTQTNSMLGSVHYLSPEQARGSKATVQSDIYAMGIIFYEMLTGHIPYDGDSAVTIALQHFQNPLPSVIAENSSVPQALENVIIKATAKKLTNRYRSVSEMYVDLSSSLSYNRRNESKLIFDETSKADTKTLPKVSQSTLTSIPKVQAQTEHKSIKNPSQAVTEETYQPQAPKKHRFKMRYLILLASLVLVAASLIWILSRTPATIAIPDVAGQTVAEAKATLKKANFEIGEEKTEASEKVEEGRIIRTDPGAGTGRKEGTKINLVVSSGKQSFQISNYVGRKSSDVIAELKEKKVPDNLIKIEEEESNESEAGTVLKQSLPEGTTYDLSKATQIVLTVAKKATTIQLGNYIGRNSTEVISELKQKKVPENLIKIEEEESSESEPGTIMKQSPGAGTTYDVSKPTQIVLTVAKKVTSVAMPSYIGSSLEFTKNNLIQIVGIKEANIEVVEVTTAPAGSVEGMVVEQSPRAGEKVDLNKTRVKISIYKPKTTSATP</sequence>
<keyword id="KW-0067">ATP-binding</keyword>
<keyword id="KW-0131">Cell cycle</keyword>
<keyword id="KW-0132">Cell division</keyword>
<keyword id="KW-1003">Cell membrane</keyword>
<keyword id="KW-0133">Cell shape</keyword>
<keyword id="KW-0178">Competence</keyword>
<keyword id="KW-0418">Kinase</keyword>
<keyword id="KW-0472">Membrane</keyword>
<keyword id="KW-0547">Nucleotide-binding</keyword>
<keyword id="KW-0597">Phosphoprotein</keyword>
<keyword id="KW-1185">Reference proteome</keyword>
<keyword id="KW-0677">Repeat</keyword>
<keyword id="KW-0717">Septation</keyword>
<keyword id="KW-0723">Serine/threonine-protein kinase</keyword>
<keyword id="KW-0808">Transferase</keyword>
<keyword id="KW-0812">Transmembrane</keyword>
<keyword id="KW-1133">Transmembrane helix</keyword>
<keyword id="KW-0843">Virulence</keyword>
<comment type="function">
    <text evidence="7">Protein kinase involved in signal transduction pathways that regulate various cellular processes. Likely senses intracellular peptidoglycan subunits present in the cell division septa of actively growing cells; thus, intracellular unlinked peptidoglycan may serve as the signal molecules that trigger StkP phosphorylation activity on a set of substrates. Plays a crucial role in the regulation of cell shape and cell division of S.pneumoniae through control of at least DivIVA activity. Is involved in competence triggering, and is required for the expression of the central competence operon comCDE. StkP also plays an important role for bacterial survival in vivo. Identified target substrates that are specifically phosphorylated by StkP in vivo, mainly on threonine residues, are DivIVA, GlmM, PpaC, MapZ, KhpB (also called EloR/Jag, shown in strains R6 and Rx1) and StkP itself. Autophosphorylated StkP is a substrate for the cotranscribed protein phosphatase PhpP (shown in the avirulent strain Rx / Cp1015); PhpP and StkP appear to constitute a functional signaling couple in vivo.</text>
</comment>
<comment type="catalytic activity">
    <reaction evidence="7">
        <text>L-seryl-[protein] + ATP = O-phospho-L-seryl-[protein] + ADP + H(+)</text>
        <dbReference type="Rhea" id="RHEA:17989"/>
        <dbReference type="Rhea" id="RHEA-COMP:9863"/>
        <dbReference type="Rhea" id="RHEA-COMP:11604"/>
        <dbReference type="ChEBI" id="CHEBI:15378"/>
        <dbReference type="ChEBI" id="CHEBI:29999"/>
        <dbReference type="ChEBI" id="CHEBI:30616"/>
        <dbReference type="ChEBI" id="CHEBI:83421"/>
        <dbReference type="ChEBI" id="CHEBI:456216"/>
        <dbReference type="EC" id="2.7.11.1"/>
    </reaction>
</comment>
<comment type="catalytic activity">
    <reaction evidence="7">
        <text>L-threonyl-[protein] + ATP = O-phospho-L-threonyl-[protein] + ADP + H(+)</text>
        <dbReference type="Rhea" id="RHEA:46608"/>
        <dbReference type="Rhea" id="RHEA-COMP:11060"/>
        <dbReference type="Rhea" id="RHEA-COMP:11605"/>
        <dbReference type="ChEBI" id="CHEBI:15378"/>
        <dbReference type="ChEBI" id="CHEBI:30013"/>
        <dbReference type="ChEBI" id="CHEBI:30616"/>
        <dbReference type="ChEBI" id="CHEBI:61977"/>
        <dbReference type="ChEBI" id="CHEBI:456216"/>
        <dbReference type="EC" id="2.7.11.1"/>
    </reaction>
</comment>
<comment type="subunit">
    <text evidence="1">Homodimer. StkP forms dimers through its transmembrane and extracellular domains. Dimer formation likely promotes autophosphorylation activity and might be necessary for targeting StkP substrate (By similarity).</text>
</comment>
<comment type="subcellular location">
    <subcellularLocation>
        <location evidence="7">Cell membrane</location>
        <topology evidence="7">Single-pass membrane protein</topology>
    </subcellularLocation>
    <text evidence="7 8">Localizes to the midcell division sites, colocalizes with PBP2b.</text>
</comment>
<comment type="domain">
    <text evidence="7">Consists of an N-terminal kinase domain, a transmembrane domain, and a C-terminal domain containing four repeats of the PASTA signature sequence (Penicillin-binding protein and Ser/Thr protein kinase associated domain). The PASTA domain binds to peptidoglycan (PGN) subunits, is essential for StkP activation and substrate phosphorylation (shown in the avirulent strain Rx / Cp1015), and is responsible for cellular targeting to midcell.</text>
</comment>
<comment type="PTM">
    <text evidence="1">Autophosphorylation occurs predominantly at the threonine residue and weakly at the serine residue. Dephosphorylated by PhpP (By similarity).</text>
</comment>
<comment type="disruption phenotype">
    <text evidence="6">Disruption of stkP gene results in strong repression of competence development for genetic transformation in vitro. Strains D39 (serotype 2) and 23477 (serotype 6) lacking this gene show a greatly attenuated virulence in lung infection and bloodstream invasion in mice, but no in vitro growth defect.</text>
</comment>
<comment type="miscellaneous">
    <text>PubMed:20453092 shows that the patterns of phosphorylated proteins are similar for S.pneumoniae Rx / Cp1015 and D39 (avirulent and virulent strains, respectively) when they are grown in complex CAT medium. Thus, in both strains, StkP phosphorylates the same set of substrates that are probably important for sustaining normal growth in laboratory conditions.</text>
</comment>
<comment type="similarity">
    <text evidence="2">Belongs to the protein kinase superfamily. Ser/Thr protein kinase family.</text>
</comment>
<gene>
    <name type="primary">stkP</name>
    <name type="ordered locus">SPD_1542</name>
</gene>
<dbReference type="EC" id="2.7.11.1"/>
<dbReference type="EMBL" id="CP000410">
    <property type="protein sequence ID" value="ABJ55478.1"/>
    <property type="molecule type" value="Genomic_DNA"/>
</dbReference>
<dbReference type="RefSeq" id="WP_000614552.1">
    <property type="nucleotide sequence ID" value="NZ_JAMLJR010000003.1"/>
</dbReference>
<dbReference type="SMR" id="Q04J43"/>
<dbReference type="PaxDb" id="373153-SPD_1542"/>
<dbReference type="KEGG" id="spd:SPD_1542"/>
<dbReference type="eggNOG" id="COG0515">
    <property type="taxonomic scope" value="Bacteria"/>
</dbReference>
<dbReference type="eggNOG" id="COG2815">
    <property type="taxonomic scope" value="Bacteria"/>
</dbReference>
<dbReference type="HOGENOM" id="CLU_000288_135_2_9"/>
<dbReference type="BioCyc" id="SPNE373153:G1G6V-1665-MONOMER"/>
<dbReference type="Proteomes" id="UP000001452">
    <property type="component" value="Chromosome"/>
</dbReference>
<dbReference type="GO" id="GO:0005886">
    <property type="term" value="C:plasma membrane"/>
    <property type="evidence" value="ECO:0007669"/>
    <property type="project" value="UniProtKB-SubCell"/>
</dbReference>
<dbReference type="GO" id="GO:0005524">
    <property type="term" value="F:ATP binding"/>
    <property type="evidence" value="ECO:0007669"/>
    <property type="project" value="UniProtKB-KW"/>
</dbReference>
<dbReference type="GO" id="GO:0106310">
    <property type="term" value="F:protein serine kinase activity"/>
    <property type="evidence" value="ECO:0007669"/>
    <property type="project" value="RHEA"/>
</dbReference>
<dbReference type="GO" id="GO:0004674">
    <property type="term" value="F:protein serine/threonine kinase activity"/>
    <property type="evidence" value="ECO:0007669"/>
    <property type="project" value="UniProtKB-KW"/>
</dbReference>
<dbReference type="GO" id="GO:0000917">
    <property type="term" value="P:division septum assembly"/>
    <property type="evidence" value="ECO:0007669"/>
    <property type="project" value="UniProtKB-KW"/>
</dbReference>
<dbReference type="GO" id="GO:0030420">
    <property type="term" value="P:establishment of competence for transformation"/>
    <property type="evidence" value="ECO:0007669"/>
    <property type="project" value="UniProtKB-KW"/>
</dbReference>
<dbReference type="GO" id="GO:0008360">
    <property type="term" value="P:regulation of cell shape"/>
    <property type="evidence" value="ECO:0007669"/>
    <property type="project" value="UniProtKB-KW"/>
</dbReference>
<dbReference type="CDD" id="cd06577">
    <property type="entry name" value="PASTA_pknB"/>
    <property type="match status" value="3"/>
</dbReference>
<dbReference type="CDD" id="cd14014">
    <property type="entry name" value="STKc_PknB_like"/>
    <property type="match status" value="1"/>
</dbReference>
<dbReference type="FunFam" id="1.10.510.10:FF:000021">
    <property type="entry name" value="Serine/threonine protein kinase"/>
    <property type="match status" value="1"/>
</dbReference>
<dbReference type="FunFam" id="3.30.200.20:FF:000035">
    <property type="entry name" value="Serine/threonine protein kinase Stk1"/>
    <property type="match status" value="1"/>
</dbReference>
<dbReference type="Gene3D" id="3.30.10.20">
    <property type="match status" value="4"/>
</dbReference>
<dbReference type="Gene3D" id="3.30.200.20">
    <property type="entry name" value="Phosphorylase Kinase, domain 1"/>
    <property type="match status" value="1"/>
</dbReference>
<dbReference type="Gene3D" id="1.10.510.10">
    <property type="entry name" value="Transferase(Phosphotransferase) domain 1"/>
    <property type="match status" value="1"/>
</dbReference>
<dbReference type="InterPro" id="IPR011009">
    <property type="entry name" value="Kinase-like_dom_sf"/>
</dbReference>
<dbReference type="InterPro" id="IPR005543">
    <property type="entry name" value="PASTA_dom"/>
</dbReference>
<dbReference type="InterPro" id="IPR000719">
    <property type="entry name" value="Prot_kinase_dom"/>
</dbReference>
<dbReference type="InterPro" id="IPR017441">
    <property type="entry name" value="Protein_kinase_ATP_BS"/>
</dbReference>
<dbReference type="InterPro" id="IPR008271">
    <property type="entry name" value="Ser/Thr_kinase_AS"/>
</dbReference>
<dbReference type="NCBIfam" id="NF033483">
    <property type="entry name" value="PknB_PASTA_kin"/>
    <property type="match status" value="1"/>
</dbReference>
<dbReference type="PANTHER" id="PTHR43289">
    <property type="entry name" value="MITOGEN-ACTIVATED PROTEIN KINASE KINASE KINASE 20-RELATED"/>
    <property type="match status" value="1"/>
</dbReference>
<dbReference type="PANTHER" id="PTHR43289:SF34">
    <property type="entry name" value="SERINE_THREONINE-PROTEIN KINASE YBDM-RELATED"/>
    <property type="match status" value="1"/>
</dbReference>
<dbReference type="Pfam" id="PF03793">
    <property type="entry name" value="PASTA"/>
    <property type="match status" value="4"/>
</dbReference>
<dbReference type="Pfam" id="PF00069">
    <property type="entry name" value="Pkinase"/>
    <property type="match status" value="1"/>
</dbReference>
<dbReference type="SMART" id="SM00740">
    <property type="entry name" value="PASTA"/>
    <property type="match status" value="4"/>
</dbReference>
<dbReference type="SMART" id="SM00220">
    <property type="entry name" value="S_TKc"/>
    <property type="match status" value="1"/>
</dbReference>
<dbReference type="SUPFAM" id="SSF56112">
    <property type="entry name" value="Protein kinase-like (PK-like)"/>
    <property type="match status" value="1"/>
</dbReference>
<dbReference type="PROSITE" id="PS51178">
    <property type="entry name" value="PASTA"/>
    <property type="match status" value="4"/>
</dbReference>
<dbReference type="PROSITE" id="PS00107">
    <property type="entry name" value="PROTEIN_KINASE_ATP"/>
    <property type="match status" value="1"/>
</dbReference>
<dbReference type="PROSITE" id="PS50011">
    <property type="entry name" value="PROTEIN_KINASE_DOM"/>
    <property type="match status" value="1"/>
</dbReference>
<dbReference type="PROSITE" id="PS00108">
    <property type="entry name" value="PROTEIN_KINASE_ST"/>
    <property type="match status" value="1"/>
</dbReference>
<feature type="chain" id="PRO_0000418145" description="Serine/threonine-protein kinase StkP">
    <location>
        <begin position="1"/>
        <end position="659"/>
    </location>
</feature>
<feature type="topological domain" description="Cytoplasmic" evidence="1">
    <location>
        <begin position="1"/>
        <end position="342"/>
    </location>
</feature>
<feature type="transmembrane region" description="Helical" evidence="1">
    <location>
        <begin position="343"/>
        <end position="363"/>
    </location>
</feature>
<feature type="topological domain" description="Extracellular" evidence="1">
    <location>
        <begin position="364"/>
        <end position="659"/>
    </location>
</feature>
<feature type="domain" description="Protein kinase" evidence="2">
    <location>
        <begin position="12"/>
        <end position="273"/>
    </location>
</feature>
<feature type="domain" description="PASTA 1" evidence="3">
    <location>
        <begin position="366"/>
        <end position="433"/>
    </location>
</feature>
<feature type="domain" description="PASTA 2" evidence="3">
    <location>
        <begin position="434"/>
        <end position="505"/>
    </location>
</feature>
<feature type="domain" description="PASTA 3" evidence="3">
    <location>
        <begin position="506"/>
        <end position="577"/>
    </location>
</feature>
<feature type="domain" description="PASTA 4" evidence="3">
    <location>
        <begin position="578"/>
        <end position="651"/>
    </location>
</feature>
<feature type="region of interest" description="Disordered" evidence="5">
    <location>
        <begin position="541"/>
        <end position="561"/>
    </location>
</feature>
<feature type="active site" description="Proton acceptor" evidence="2 4">
    <location>
        <position position="136"/>
    </location>
</feature>
<feature type="binding site" evidence="2">
    <location>
        <begin position="18"/>
        <end position="26"/>
    </location>
    <ligand>
        <name>ATP</name>
        <dbReference type="ChEBI" id="CHEBI:30616"/>
    </ligand>
</feature>
<feature type="binding site" evidence="2">
    <location>
        <position position="42"/>
    </location>
    <ligand>
        <name>ATP</name>
        <dbReference type="ChEBI" id="CHEBI:30616"/>
    </ligand>
</feature>
<name>STKP_STRP2</name>
<accession>Q04J43</accession>
<protein>
    <recommendedName>
        <fullName>Serine/threonine-protein kinase StkP</fullName>
        <shortName>Ser/Thr-protein kinase StkP</shortName>
        <ecNumber>2.7.11.1</ecNumber>
    </recommendedName>
    <alternativeName>
        <fullName>Eukaryotic-type Ser/Thr protein kinase</fullName>
        <shortName>ESTPK</shortName>
    </alternativeName>
</protein>
<organism>
    <name type="scientific">Streptococcus pneumoniae serotype 2 (strain D39 / NCTC 7466)</name>
    <dbReference type="NCBI Taxonomy" id="373153"/>
    <lineage>
        <taxon>Bacteria</taxon>
        <taxon>Bacillati</taxon>
        <taxon>Bacillota</taxon>
        <taxon>Bacilli</taxon>
        <taxon>Lactobacillales</taxon>
        <taxon>Streptococcaceae</taxon>
        <taxon>Streptococcus</taxon>
    </lineage>
</organism>
<proteinExistence type="evidence at protein level"/>